<proteinExistence type="inferred from homology"/>
<sequence length="151" mass="16894">MVVRRRKKSRHLRGRTRTMGWGRIGQHRGSGSRGGFGAAGMHKHMWTWVVKYAPTWFGKHGFNRPQIYELKASEINVGELAEKLDAWLREGVAKQEEGKIVVNLAELGYAKLLGRGKITRPVKVIVPAATERAVKKIEEAGGEVVILKQQG</sequence>
<accession>A2BME1</accession>
<name>RL15_HYPBU</name>
<organism>
    <name type="scientific">Hyperthermus butylicus (strain DSM 5456 / JCM 9403 / PLM1-5)</name>
    <dbReference type="NCBI Taxonomy" id="415426"/>
    <lineage>
        <taxon>Archaea</taxon>
        <taxon>Thermoproteota</taxon>
        <taxon>Thermoprotei</taxon>
        <taxon>Desulfurococcales</taxon>
        <taxon>Pyrodictiaceae</taxon>
        <taxon>Hyperthermus</taxon>
    </lineage>
</organism>
<feature type="chain" id="PRO_1000054474" description="Large ribosomal subunit protein uL15">
    <location>
        <begin position="1"/>
        <end position="151"/>
    </location>
</feature>
<dbReference type="EMBL" id="CP000493">
    <property type="protein sequence ID" value="ABM81152.1"/>
    <property type="molecule type" value="Genomic_DNA"/>
</dbReference>
<dbReference type="RefSeq" id="WP_011822470.1">
    <property type="nucleotide sequence ID" value="NC_008818.1"/>
</dbReference>
<dbReference type="SMR" id="A2BME1"/>
<dbReference type="STRING" id="415426.Hbut_1322"/>
<dbReference type="EnsemblBacteria" id="ABM81152">
    <property type="protein sequence ID" value="ABM81152"/>
    <property type="gene ID" value="Hbut_1322"/>
</dbReference>
<dbReference type="GeneID" id="4782009"/>
<dbReference type="KEGG" id="hbu:Hbut_1322"/>
<dbReference type="eggNOG" id="arCOG00779">
    <property type="taxonomic scope" value="Archaea"/>
</dbReference>
<dbReference type="HOGENOM" id="CLU_109163_0_0_2"/>
<dbReference type="OrthoDB" id="9418at2157"/>
<dbReference type="Proteomes" id="UP000002593">
    <property type="component" value="Chromosome"/>
</dbReference>
<dbReference type="GO" id="GO:0022625">
    <property type="term" value="C:cytosolic large ribosomal subunit"/>
    <property type="evidence" value="ECO:0007669"/>
    <property type="project" value="TreeGrafter"/>
</dbReference>
<dbReference type="GO" id="GO:0019843">
    <property type="term" value="F:rRNA binding"/>
    <property type="evidence" value="ECO:0007669"/>
    <property type="project" value="UniProtKB-UniRule"/>
</dbReference>
<dbReference type="GO" id="GO:0003735">
    <property type="term" value="F:structural constituent of ribosome"/>
    <property type="evidence" value="ECO:0007669"/>
    <property type="project" value="InterPro"/>
</dbReference>
<dbReference type="GO" id="GO:0006412">
    <property type="term" value="P:translation"/>
    <property type="evidence" value="ECO:0007669"/>
    <property type="project" value="UniProtKB-UniRule"/>
</dbReference>
<dbReference type="Gene3D" id="3.100.10.10">
    <property type="match status" value="1"/>
</dbReference>
<dbReference type="Gene3D" id="4.10.990.10">
    <property type="match status" value="1"/>
</dbReference>
<dbReference type="HAMAP" id="MF_01341">
    <property type="entry name" value="Ribosomal_uL15"/>
    <property type="match status" value="1"/>
</dbReference>
<dbReference type="InterPro" id="IPR027386">
    <property type="entry name" value="Rbsml_uL15_N"/>
</dbReference>
<dbReference type="InterPro" id="IPR030878">
    <property type="entry name" value="Ribosomal_uL15"/>
</dbReference>
<dbReference type="InterPro" id="IPR021131">
    <property type="entry name" value="Ribosomal_uL15/eL18"/>
</dbReference>
<dbReference type="InterPro" id="IPR036227">
    <property type="entry name" value="Ribosomal_uL15/eL18_sf"/>
</dbReference>
<dbReference type="InterPro" id="IPR001196">
    <property type="entry name" value="Ribosomal_uL15_CS"/>
</dbReference>
<dbReference type="PANTHER" id="PTHR11721">
    <property type="entry name" value="60S RIBOSOMAL PROTEIN L27A"/>
    <property type="match status" value="1"/>
</dbReference>
<dbReference type="PANTHER" id="PTHR11721:SF3">
    <property type="entry name" value="LARGE RIBOSOMAL SUBUNIT PROTEIN UL15"/>
    <property type="match status" value="1"/>
</dbReference>
<dbReference type="Pfam" id="PF00828">
    <property type="entry name" value="Ribosomal_L27A"/>
    <property type="match status" value="1"/>
</dbReference>
<dbReference type="SUPFAM" id="SSF52080">
    <property type="entry name" value="Ribosomal proteins L15p and L18e"/>
    <property type="match status" value="1"/>
</dbReference>
<dbReference type="PROSITE" id="PS00475">
    <property type="entry name" value="RIBOSOMAL_L15"/>
    <property type="match status" value="1"/>
</dbReference>
<keyword id="KW-1185">Reference proteome</keyword>
<keyword id="KW-0687">Ribonucleoprotein</keyword>
<keyword id="KW-0689">Ribosomal protein</keyword>
<keyword id="KW-0694">RNA-binding</keyword>
<keyword id="KW-0699">rRNA-binding</keyword>
<reference key="1">
    <citation type="journal article" date="2007" name="Archaea">
        <title>The genome of Hyperthermus butylicus: a sulfur-reducing, peptide fermenting, neutrophilic Crenarchaeote growing up to 108 degrees C.</title>
        <authorList>
            <person name="Bruegger K."/>
            <person name="Chen L."/>
            <person name="Stark M."/>
            <person name="Zibat A."/>
            <person name="Redder P."/>
            <person name="Ruepp A."/>
            <person name="Awayez M."/>
            <person name="She Q."/>
            <person name="Garrett R.A."/>
            <person name="Klenk H.-P."/>
        </authorList>
    </citation>
    <scope>NUCLEOTIDE SEQUENCE [LARGE SCALE GENOMIC DNA]</scope>
    <source>
        <strain>DSM 5456 / JCM 9403 / PLM1-5</strain>
    </source>
</reference>
<gene>
    <name evidence="1" type="primary">rpl15</name>
    <name type="ordered locus">Hbut_1322</name>
</gene>
<protein>
    <recommendedName>
        <fullName evidence="1">Large ribosomal subunit protein uL15</fullName>
    </recommendedName>
    <alternativeName>
        <fullName evidence="2">50S ribosomal protein L15</fullName>
    </alternativeName>
</protein>
<comment type="function">
    <text evidence="1">Binds to the 23S rRNA.</text>
</comment>
<comment type="subunit">
    <text evidence="1">Part of the 50S ribosomal subunit.</text>
</comment>
<comment type="similarity">
    <text evidence="1">Belongs to the universal ribosomal protein uL15 family.</text>
</comment>
<evidence type="ECO:0000255" key="1">
    <source>
        <dbReference type="HAMAP-Rule" id="MF_01341"/>
    </source>
</evidence>
<evidence type="ECO:0000305" key="2"/>